<name>GYRB_TREDE</name>
<sequence length="638" mass="71392">MTKSNYSANNITVLKGLEAVRKRPGMYIGSTGPDGLHHLVYEVVDNCIDEAMAGFCDKILVVLEPNDIVRVEDNGRGIPVDIHPTEKISALELVLTRLHAGGKFDKGSYKVSGGLHGVGVSVVNALSVWMEAKVYKDGFEHYAKFEKGSILEPVKKIGETEKSGTVIRWAVDPSIFTETTVYNFEVLATRLRELAFLNSKISITMRDERLSTPKEVTFAFEGGISQFVSYLNESKQVFPKSPVFIEGEKNDILCEVAIQYNDGYNENLLSFVNDINTREGGTHLEGFKTALTRVMNDFLKKYPKLVKKMDKEEKLTGEDVRAGLTAIVSVKVPEPQFEGQTKTKLGNSDVRGIVDSFVNEKLTLFFEQNPNEVEKVLEKCVAEAAARIAARRAKEATRRKSGLDSFGLPGKLADCSLKDPESCEVYIVEGDSAGGSAKKGRDSKTQAILPLWGKMLNVEKTRLDKVVNNEKLQPIIATLGTGIGKDFNIEKLRYHKVIIMADADVDGSHIRTLLLTFFFRYMPQVIEKGHVYLAMPPLYKISHNKKEWYVYNDDERDSVLDQIGRGNNAAVQRYKGLGEMDGTQLWETTMDPARRKMMRVTLPDAVEADRIFSTLMGEEVEPRRKFIEENAVYANLDV</sequence>
<comment type="function">
    <text evidence="1">A type II topoisomerase that negatively supercoils closed circular double-stranded (ds) DNA in an ATP-dependent manner to modulate DNA topology and maintain chromosomes in an underwound state. Negative supercoiling favors strand separation, and DNA replication, transcription, recombination and repair, all of which involve strand separation. Also able to catalyze the interconversion of other topological isomers of dsDNA rings, including catenanes and knotted rings. Type II topoisomerases break and join 2 DNA strands simultaneously in an ATP-dependent manner.</text>
</comment>
<comment type="catalytic activity">
    <reaction evidence="1">
        <text>ATP-dependent breakage, passage and rejoining of double-stranded DNA.</text>
        <dbReference type="EC" id="5.6.2.2"/>
    </reaction>
</comment>
<comment type="cofactor">
    <cofactor evidence="1">
        <name>Mg(2+)</name>
        <dbReference type="ChEBI" id="CHEBI:18420"/>
    </cofactor>
    <cofactor evidence="1">
        <name>Mn(2+)</name>
        <dbReference type="ChEBI" id="CHEBI:29035"/>
    </cofactor>
    <cofactor evidence="1">
        <name>Ca(2+)</name>
        <dbReference type="ChEBI" id="CHEBI:29108"/>
    </cofactor>
    <text evidence="1">Binds two Mg(2+) per subunit. The magnesium ions form salt bridges with both the protein and the DNA. Can also accept other divalent metal cations, such as Mn(2+) or Ca(2+).</text>
</comment>
<comment type="subunit">
    <text evidence="1">Heterotetramer, composed of two GyrA and two GyrB chains. In the heterotetramer, GyrA contains the active site tyrosine that forms a transient covalent intermediate with DNA, while GyrB binds cofactors and catalyzes ATP hydrolysis.</text>
</comment>
<comment type="subcellular location">
    <subcellularLocation>
        <location evidence="1">Cytoplasm</location>
    </subcellularLocation>
</comment>
<comment type="miscellaneous">
    <text evidence="1">Few gyrases are as efficient as E.coli at forming negative supercoils. Not all organisms have 2 type II topoisomerases; in organisms with a single type II topoisomerase this enzyme also has to decatenate newly replicated chromosomes.</text>
</comment>
<comment type="similarity">
    <text evidence="1">Belongs to the type II topoisomerase GyrB family.</text>
</comment>
<gene>
    <name evidence="1" type="primary">gyrB</name>
    <name type="ordered locus">TDE_0002</name>
</gene>
<organism>
    <name type="scientific">Treponema denticola (strain ATCC 35405 / DSM 14222 / CIP 103919 / JCM 8153 / KCTC 15104)</name>
    <dbReference type="NCBI Taxonomy" id="243275"/>
    <lineage>
        <taxon>Bacteria</taxon>
        <taxon>Pseudomonadati</taxon>
        <taxon>Spirochaetota</taxon>
        <taxon>Spirochaetia</taxon>
        <taxon>Spirochaetales</taxon>
        <taxon>Treponemataceae</taxon>
        <taxon>Treponema</taxon>
    </lineage>
</organism>
<evidence type="ECO:0000255" key="1">
    <source>
        <dbReference type="HAMAP-Rule" id="MF_01898"/>
    </source>
</evidence>
<evidence type="ECO:0000269" key="2">
    <source>
    </source>
</evidence>
<proteinExistence type="evidence at protein level"/>
<accession>O87545</accession>
<protein>
    <recommendedName>
        <fullName evidence="1">DNA gyrase subunit B</fullName>
        <ecNumber evidence="1">5.6.2.2</ecNumber>
    </recommendedName>
</protein>
<reference key="1">
    <citation type="journal article" date="2000" name="Gene">
        <title>Molecular characterization of the gyrB region of the oral spirochete, Treponema denticola.</title>
        <authorList>
            <person name="Greene S.R."/>
            <person name="Stamm L.V."/>
        </authorList>
    </citation>
    <scope>NUCLEOTIDE SEQUENCE [GENOMIC DNA]</scope>
    <scope>MUTAGENESIS OF LYS-136</scope>
    <source>
        <strain>ATCC 35405 / DSM 14222 / CIP 103919 / JCM 8153 / KCTC 15104</strain>
    </source>
</reference>
<reference key="2">
    <citation type="journal article" date="2004" name="Proc. Natl. Acad. Sci. U.S.A.">
        <title>Comparison of the genome of the oral pathogen Treponema denticola with other spirochete genomes.</title>
        <authorList>
            <person name="Seshadri R."/>
            <person name="Myers G.S.A."/>
            <person name="Tettelin H."/>
            <person name="Eisen J.A."/>
            <person name="Heidelberg J.F."/>
            <person name="Dodson R.J."/>
            <person name="Davidsen T.M."/>
            <person name="DeBoy R.T."/>
            <person name="Fouts D.E."/>
            <person name="Haft D.H."/>
            <person name="Selengut J."/>
            <person name="Ren Q."/>
            <person name="Brinkac L.M."/>
            <person name="Madupu R."/>
            <person name="Kolonay J.F."/>
            <person name="Durkin S.A."/>
            <person name="Daugherty S.C."/>
            <person name="Shetty J."/>
            <person name="Shvartsbeyn A."/>
            <person name="Gebregeorgis E."/>
            <person name="Geer K."/>
            <person name="Tsegaye G."/>
            <person name="Malek J.A."/>
            <person name="Ayodeji B."/>
            <person name="Shatsman S."/>
            <person name="McLeod M.P."/>
            <person name="Smajs D."/>
            <person name="Howell J.K."/>
            <person name="Pal S."/>
            <person name="Amin A."/>
            <person name="Vashisth P."/>
            <person name="McNeill T.Z."/>
            <person name="Xiang Q."/>
            <person name="Sodergren E."/>
            <person name="Baca E."/>
            <person name="Weinstock G.M."/>
            <person name="Norris S.J."/>
            <person name="Fraser C.M."/>
            <person name="Paulsen I.T."/>
        </authorList>
    </citation>
    <scope>NUCLEOTIDE SEQUENCE [LARGE SCALE GENOMIC DNA]</scope>
    <source>
        <strain>ATCC 35405 / DSM 14222 / CIP 103919 / JCM 8153 / KCTC 15104</strain>
    </source>
</reference>
<feature type="chain" id="PRO_0000145356" description="DNA gyrase subunit B">
    <location>
        <begin position="1"/>
        <end position="638"/>
    </location>
</feature>
<feature type="domain" description="Toprim" evidence="1">
    <location>
        <begin position="423"/>
        <end position="537"/>
    </location>
</feature>
<feature type="binding site" evidence="1">
    <location>
        <position position="429"/>
    </location>
    <ligand>
        <name>Mg(2+)</name>
        <dbReference type="ChEBI" id="CHEBI:18420"/>
        <label>1</label>
        <note>catalytic</note>
    </ligand>
</feature>
<feature type="binding site" evidence="1">
    <location>
        <position position="502"/>
    </location>
    <ligand>
        <name>Mg(2+)</name>
        <dbReference type="ChEBI" id="CHEBI:18420"/>
        <label>1</label>
        <note>catalytic</note>
    </ligand>
</feature>
<feature type="binding site" evidence="1">
    <location>
        <position position="502"/>
    </location>
    <ligand>
        <name>Mg(2+)</name>
        <dbReference type="ChEBI" id="CHEBI:18420"/>
        <label>2</label>
    </ligand>
</feature>
<feature type="binding site" evidence="1">
    <location>
        <position position="504"/>
    </location>
    <ligand>
        <name>Mg(2+)</name>
        <dbReference type="ChEBI" id="CHEBI:18420"/>
        <label>2</label>
    </ligand>
</feature>
<feature type="site" description="Interaction with DNA" evidence="1">
    <location>
        <position position="454"/>
    </location>
</feature>
<feature type="site" description="Interaction with DNA" evidence="1">
    <location>
        <position position="457"/>
    </location>
</feature>
<feature type="mutagenesis site" description="20-fold higher resistance to antibiotic coumermycin A1." evidence="2">
    <original>K</original>
    <variation>T</variation>
    <variation>Q</variation>
    <location>
        <position position="136"/>
    </location>
</feature>
<dbReference type="EC" id="5.6.2.2" evidence="1"/>
<dbReference type="EMBL" id="AF083949">
    <property type="protein sequence ID" value="AAC62070.1"/>
    <property type="molecule type" value="Genomic_DNA"/>
</dbReference>
<dbReference type="EMBL" id="AE017226">
    <property type="protein sequence ID" value="AAS10500.1"/>
    <property type="molecule type" value="Genomic_DNA"/>
</dbReference>
<dbReference type="RefSeq" id="NP_970619.1">
    <property type="nucleotide sequence ID" value="NC_002967.9"/>
</dbReference>
<dbReference type="RefSeq" id="WP_002666949.1">
    <property type="nucleotide sequence ID" value="NC_002967.9"/>
</dbReference>
<dbReference type="SMR" id="O87545"/>
<dbReference type="STRING" id="243275.TDE_0002"/>
<dbReference type="PaxDb" id="243275-TDE_0002"/>
<dbReference type="GeneID" id="2741616"/>
<dbReference type="KEGG" id="tde:TDE_0002"/>
<dbReference type="PATRIC" id="fig|243275.7.peg.2"/>
<dbReference type="eggNOG" id="COG0187">
    <property type="taxonomic scope" value="Bacteria"/>
</dbReference>
<dbReference type="HOGENOM" id="CLU_006146_4_1_12"/>
<dbReference type="OrthoDB" id="9802808at2"/>
<dbReference type="Proteomes" id="UP000008212">
    <property type="component" value="Chromosome"/>
</dbReference>
<dbReference type="GO" id="GO:0005694">
    <property type="term" value="C:chromosome"/>
    <property type="evidence" value="ECO:0007669"/>
    <property type="project" value="InterPro"/>
</dbReference>
<dbReference type="GO" id="GO:0005737">
    <property type="term" value="C:cytoplasm"/>
    <property type="evidence" value="ECO:0007669"/>
    <property type="project" value="UniProtKB-SubCell"/>
</dbReference>
<dbReference type="GO" id="GO:0005524">
    <property type="term" value="F:ATP binding"/>
    <property type="evidence" value="ECO:0007669"/>
    <property type="project" value="UniProtKB-UniRule"/>
</dbReference>
<dbReference type="GO" id="GO:0003677">
    <property type="term" value="F:DNA binding"/>
    <property type="evidence" value="ECO:0007669"/>
    <property type="project" value="UniProtKB-KW"/>
</dbReference>
<dbReference type="GO" id="GO:0003918">
    <property type="term" value="F:DNA topoisomerase type II (double strand cut, ATP-hydrolyzing) activity"/>
    <property type="evidence" value="ECO:0007669"/>
    <property type="project" value="UniProtKB-UniRule"/>
</dbReference>
<dbReference type="GO" id="GO:0046872">
    <property type="term" value="F:metal ion binding"/>
    <property type="evidence" value="ECO:0007669"/>
    <property type="project" value="UniProtKB-KW"/>
</dbReference>
<dbReference type="GO" id="GO:0006265">
    <property type="term" value="P:DNA topological change"/>
    <property type="evidence" value="ECO:0007669"/>
    <property type="project" value="UniProtKB-UniRule"/>
</dbReference>
<dbReference type="GO" id="GO:0006261">
    <property type="term" value="P:DNA-templated DNA replication"/>
    <property type="evidence" value="ECO:0007669"/>
    <property type="project" value="UniProtKB-UniRule"/>
</dbReference>
<dbReference type="GO" id="GO:0046677">
    <property type="term" value="P:response to antibiotic"/>
    <property type="evidence" value="ECO:0007669"/>
    <property type="project" value="UniProtKB-KW"/>
</dbReference>
<dbReference type="CDD" id="cd16928">
    <property type="entry name" value="HATPase_GyrB-like"/>
    <property type="match status" value="1"/>
</dbReference>
<dbReference type="CDD" id="cd00822">
    <property type="entry name" value="TopoII_Trans_DNA_gyrase"/>
    <property type="match status" value="1"/>
</dbReference>
<dbReference type="CDD" id="cd03366">
    <property type="entry name" value="TOPRIM_TopoIIA_GyrB"/>
    <property type="match status" value="1"/>
</dbReference>
<dbReference type="FunFam" id="3.30.230.10:FF:000005">
    <property type="entry name" value="DNA gyrase subunit B"/>
    <property type="match status" value="1"/>
</dbReference>
<dbReference type="FunFam" id="3.30.565.10:FF:000002">
    <property type="entry name" value="DNA gyrase subunit B"/>
    <property type="match status" value="1"/>
</dbReference>
<dbReference type="FunFam" id="3.40.50.670:FF:000002">
    <property type="entry name" value="DNA gyrase subunit B"/>
    <property type="match status" value="1"/>
</dbReference>
<dbReference type="Gene3D" id="3.30.230.10">
    <property type="match status" value="1"/>
</dbReference>
<dbReference type="Gene3D" id="3.40.50.670">
    <property type="match status" value="1"/>
</dbReference>
<dbReference type="Gene3D" id="3.30.565.10">
    <property type="entry name" value="Histidine kinase-like ATPase, C-terminal domain"/>
    <property type="match status" value="1"/>
</dbReference>
<dbReference type="HAMAP" id="MF_01898">
    <property type="entry name" value="GyrB"/>
    <property type="match status" value="1"/>
</dbReference>
<dbReference type="InterPro" id="IPR002288">
    <property type="entry name" value="DNA_gyrase_B_C"/>
</dbReference>
<dbReference type="InterPro" id="IPR011557">
    <property type="entry name" value="GyrB"/>
</dbReference>
<dbReference type="InterPro" id="IPR036890">
    <property type="entry name" value="HATPase_C_sf"/>
</dbReference>
<dbReference type="InterPro" id="IPR020568">
    <property type="entry name" value="Ribosomal_Su5_D2-typ_SF"/>
</dbReference>
<dbReference type="InterPro" id="IPR014721">
    <property type="entry name" value="Ribsml_uS5_D2-typ_fold_subgr"/>
</dbReference>
<dbReference type="InterPro" id="IPR001241">
    <property type="entry name" value="Topo_IIA"/>
</dbReference>
<dbReference type="InterPro" id="IPR013760">
    <property type="entry name" value="Topo_IIA-like_dom_sf"/>
</dbReference>
<dbReference type="InterPro" id="IPR000565">
    <property type="entry name" value="Topo_IIA_B"/>
</dbReference>
<dbReference type="InterPro" id="IPR013759">
    <property type="entry name" value="Topo_IIA_B_C"/>
</dbReference>
<dbReference type="InterPro" id="IPR013506">
    <property type="entry name" value="Topo_IIA_bsu_dom2"/>
</dbReference>
<dbReference type="InterPro" id="IPR018522">
    <property type="entry name" value="TopoIIA_CS"/>
</dbReference>
<dbReference type="InterPro" id="IPR006171">
    <property type="entry name" value="TOPRIM_dom"/>
</dbReference>
<dbReference type="InterPro" id="IPR034160">
    <property type="entry name" value="TOPRIM_GyrB"/>
</dbReference>
<dbReference type="NCBIfam" id="TIGR01059">
    <property type="entry name" value="gyrB"/>
    <property type="match status" value="1"/>
</dbReference>
<dbReference type="NCBIfam" id="NF004189">
    <property type="entry name" value="PRK05644.1"/>
    <property type="match status" value="1"/>
</dbReference>
<dbReference type="NCBIfam" id="NF011501">
    <property type="entry name" value="PRK14939.1"/>
    <property type="match status" value="1"/>
</dbReference>
<dbReference type="PANTHER" id="PTHR45866:SF1">
    <property type="entry name" value="DNA GYRASE SUBUNIT B, MITOCHONDRIAL"/>
    <property type="match status" value="1"/>
</dbReference>
<dbReference type="PANTHER" id="PTHR45866">
    <property type="entry name" value="DNA GYRASE/TOPOISOMERASE SUBUNIT B"/>
    <property type="match status" value="1"/>
</dbReference>
<dbReference type="Pfam" id="PF00204">
    <property type="entry name" value="DNA_gyraseB"/>
    <property type="match status" value="1"/>
</dbReference>
<dbReference type="Pfam" id="PF00986">
    <property type="entry name" value="DNA_gyraseB_C"/>
    <property type="match status" value="1"/>
</dbReference>
<dbReference type="Pfam" id="PF02518">
    <property type="entry name" value="HATPase_c"/>
    <property type="match status" value="1"/>
</dbReference>
<dbReference type="Pfam" id="PF01751">
    <property type="entry name" value="Toprim"/>
    <property type="match status" value="1"/>
</dbReference>
<dbReference type="PRINTS" id="PR01159">
    <property type="entry name" value="DNAGYRASEB"/>
</dbReference>
<dbReference type="PRINTS" id="PR00418">
    <property type="entry name" value="TPI2FAMILY"/>
</dbReference>
<dbReference type="SMART" id="SM00387">
    <property type="entry name" value="HATPase_c"/>
    <property type="match status" value="1"/>
</dbReference>
<dbReference type="SMART" id="SM00433">
    <property type="entry name" value="TOP2c"/>
    <property type="match status" value="1"/>
</dbReference>
<dbReference type="SUPFAM" id="SSF55874">
    <property type="entry name" value="ATPase domain of HSP90 chaperone/DNA topoisomerase II/histidine kinase"/>
    <property type="match status" value="1"/>
</dbReference>
<dbReference type="SUPFAM" id="SSF54211">
    <property type="entry name" value="Ribosomal protein S5 domain 2-like"/>
    <property type="match status" value="1"/>
</dbReference>
<dbReference type="SUPFAM" id="SSF56719">
    <property type="entry name" value="Type II DNA topoisomerase"/>
    <property type="match status" value="1"/>
</dbReference>
<dbReference type="PROSITE" id="PS00177">
    <property type="entry name" value="TOPOISOMERASE_II"/>
    <property type="match status" value="1"/>
</dbReference>
<dbReference type="PROSITE" id="PS50880">
    <property type="entry name" value="TOPRIM"/>
    <property type="match status" value="1"/>
</dbReference>
<keyword id="KW-0046">Antibiotic resistance</keyword>
<keyword id="KW-0067">ATP-binding</keyword>
<keyword id="KW-0963">Cytoplasm</keyword>
<keyword id="KW-0238">DNA-binding</keyword>
<keyword id="KW-0413">Isomerase</keyword>
<keyword id="KW-0460">Magnesium</keyword>
<keyword id="KW-0479">Metal-binding</keyword>
<keyword id="KW-0547">Nucleotide-binding</keyword>
<keyword id="KW-1185">Reference proteome</keyword>
<keyword id="KW-0799">Topoisomerase</keyword>